<organism>
    <name type="scientific">Gallus gallus</name>
    <name type="common">Chicken</name>
    <dbReference type="NCBI Taxonomy" id="9031"/>
    <lineage>
        <taxon>Eukaryota</taxon>
        <taxon>Metazoa</taxon>
        <taxon>Chordata</taxon>
        <taxon>Craniata</taxon>
        <taxon>Vertebrata</taxon>
        <taxon>Euteleostomi</taxon>
        <taxon>Archelosauria</taxon>
        <taxon>Archosauria</taxon>
        <taxon>Dinosauria</taxon>
        <taxon>Saurischia</taxon>
        <taxon>Theropoda</taxon>
        <taxon>Coelurosauria</taxon>
        <taxon>Aves</taxon>
        <taxon>Neognathae</taxon>
        <taxon>Galloanserae</taxon>
        <taxon>Galliformes</taxon>
        <taxon>Phasianidae</taxon>
        <taxon>Phasianinae</taxon>
        <taxon>Gallus</taxon>
    </lineage>
</organism>
<evidence type="ECO:0000250" key="1">
    <source>
        <dbReference type="UniProtKB" id="P68363"/>
    </source>
</evidence>
<evidence type="ECO:0000250" key="2">
    <source>
        <dbReference type="UniProtKB" id="P68369"/>
    </source>
</evidence>
<evidence type="ECO:0000250" key="3">
    <source>
        <dbReference type="UniProtKB" id="Q71U36"/>
    </source>
</evidence>
<evidence type="ECO:0000305" key="4"/>
<accession>P09643</accession>
<reference key="1">
    <citation type="journal article" date="1988" name="EMBO J.">
        <title>A survey of the alpha-tubulin gene family in chicken: unexpected sequence heterogeneity in the polypeptides encoded by five expressed genes.</title>
        <authorList>
            <person name="Pratt L.F."/>
            <person name="Cleveland D.W."/>
        </authorList>
    </citation>
    <scope>NUCLEOTIDE SEQUENCE [GENOMIC DNA]</scope>
</reference>
<comment type="function">
    <text>Tubulin is the major constituent of microtubules, a cylinder consisting of laterally associated linear protofilaments composed of alpha- and beta-tubulin heterodimers. Microtubules grow by the addition of GTP-tubulin dimers to the microtubule end, where a stabilizing cap forms. Below the cap, tubulin dimers are in GDP-bound state, owing to GTPase activity of alpha-tubulin.</text>
</comment>
<comment type="catalytic activity">
    <reaction evidence="1">
        <text>GTP + H2O = GDP + phosphate + H(+)</text>
        <dbReference type="Rhea" id="RHEA:19669"/>
        <dbReference type="ChEBI" id="CHEBI:15377"/>
        <dbReference type="ChEBI" id="CHEBI:15378"/>
        <dbReference type="ChEBI" id="CHEBI:37565"/>
        <dbReference type="ChEBI" id="CHEBI:43474"/>
        <dbReference type="ChEBI" id="CHEBI:58189"/>
    </reaction>
    <physiologicalReaction direction="left-to-right" evidence="1">
        <dbReference type="Rhea" id="RHEA:19670"/>
    </physiologicalReaction>
</comment>
<comment type="cofactor">
    <cofactor evidence="1">
        <name>Mg(2+)</name>
        <dbReference type="ChEBI" id="CHEBI:18420"/>
    </cofactor>
</comment>
<comment type="subunit">
    <text>Dimer of alpha and beta chains. A typical microtubule is a hollow water-filled tube with an outer diameter of 25 nm and an inner diameter of 15 nM. Alpha-beta heterodimers associate head-to-tail to form protofilaments running lengthwise along the microtubule wall with the beta-tubulin subunit facing the microtubule plus end conferring a structural polarity. Microtubules usually have 13 protofilaments but different protofilament numbers can be found in some organisms and specialized cells.</text>
</comment>
<comment type="subcellular location">
    <subcellularLocation>
        <location>Cytoplasm</location>
        <location>Cytoskeleton</location>
    </subcellularLocation>
</comment>
<comment type="PTM">
    <text evidence="2">Some glutamate residues at the C-terminus are polyglycylated, resulting in polyglycine chains on the gamma-carboxyl group. Glycylation is mainly limited to tubulin incorporated into axonemes (cilia and flagella) whereas glutamylation is prevalent in neuronal cells, centrioles, axonemes, and the mitotic spindle. Both modifications can coexist on the same protein on adjacent residues, and lowering polyglycylation levels increases polyglutamylation, and reciprocally. The precise function of polyglycylation is still unclear.</text>
</comment>
<comment type="PTM">
    <text evidence="2 3">Some glutamate residues at the C-terminus are polyglutamylated, resulting in polyglutamate chains on the gamma-carboxyl group (By similarity). Polyglutamylation plays a key role in microtubule severing by spastin (SPAST). SPAST preferentially recognizes and acts on microtubules decorated with short polyglutamate tails: severing activity by SPAST increases as the number of glutamates per tubulin rises from one to eight, but decreases beyond this glutamylation threshold (By similarity).</text>
</comment>
<comment type="miscellaneous">
    <text>This tubulin does not have a C-terminal tyrosine.</text>
</comment>
<comment type="miscellaneous">
    <text>There are at least seven alpha tubulin genes (alpha-1 to alpha-6, and alpha-8), and a pseudogene (alpha-7) in chicken.</text>
</comment>
<comment type="similarity">
    <text evidence="4">Belongs to the tubulin family.</text>
</comment>
<dbReference type="EC" id="3.6.5.-" evidence="1"/>
<dbReference type="EMBL" id="X07443">
    <property type="protein sequence ID" value="CAA30325.1"/>
    <property type="molecule type" value="Genomic_DNA"/>
</dbReference>
<dbReference type="EMBL" id="X07444">
    <property type="protein sequence ID" value="CAA30325.1"/>
    <property type="status" value="JOINED"/>
    <property type="molecule type" value="Genomic_DNA"/>
</dbReference>
<dbReference type="PIR" id="S00469">
    <property type="entry name" value="UBCHA4"/>
</dbReference>
<dbReference type="SMR" id="P09643"/>
<dbReference type="FunCoup" id="P09643">
    <property type="interactions" value="30"/>
</dbReference>
<dbReference type="PaxDb" id="9031-ENSGALP00000036688"/>
<dbReference type="VEuPathDB" id="HostDB:geneid_418166"/>
<dbReference type="eggNOG" id="KOG1376">
    <property type="taxonomic scope" value="Eukaryota"/>
</dbReference>
<dbReference type="InParanoid" id="P09643"/>
<dbReference type="PhylomeDB" id="P09643"/>
<dbReference type="Proteomes" id="UP000000539">
    <property type="component" value="Unassembled WGS sequence"/>
</dbReference>
<dbReference type="GO" id="GO:0005737">
    <property type="term" value="C:cytoplasm"/>
    <property type="evidence" value="ECO:0000318"/>
    <property type="project" value="GO_Central"/>
</dbReference>
<dbReference type="GO" id="GO:0005874">
    <property type="term" value="C:microtubule"/>
    <property type="evidence" value="ECO:0000318"/>
    <property type="project" value="GO_Central"/>
</dbReference>
<dbReference type="GO" id="GO:0005525">
    <property type="term" value="F:GTP binding"/>
    <property type="evidence" value="ECO:0000318"/>
    <property type="project" value="GO_Central"/>
</dbReference>
<dbReference type="GO" id="GO:0016787">
    <property type="term" value="F:hydrolase activity"/>
    <property type="evidence" value="ECO:0007669"/>
    <property type="project" value="UniProtKB-KW"/>
</dbReference>
<dbReference type="GO" id="GO:0005200">
    <property type="term" value="F:structural constituent of cytoskeleton"/>
    <property type="evidence" value="ECO:0000318"/>
    <property type="project" value="GO_Central"/>
</dbReference>
<dbReference type="GO" id="GO:0000226">
    <property type="term" value="P:microtubule cytoskeleton organization"/>
    <property type="evidence" value="ECO:0000318"/>
    <property type="project" value="GO_Central"/>
</dbReference>
<dbReference type="GO" id="GO:0000278">
    <property type="term" value="P:mitotic cell cycle"/>
    <property type="evidence" value="ECO:0000318"/>
    <property type="project" value="GO_Central"/>
</dbReference>
<dbReference type="CDD" id="cd02186">
    <property type="entry name" value="alpha_tubulin"/>
    <property type="match status" value="1"/>
</dbReference>
<dbReference type="FunFam" id="1.10.287.600:FF:000005">
    <property type="entry name" value="Tubulin alpha chain"/>
    <property type="match status" value="1"/>
</dbReference>
<dbReference type="FunFam" id="3.30.1330.20:FF:000001">
    <property type="entry name" value="Tubulin alpha chain"/>
    <property type="match status" value="1"/>
</dbReference>
<dbReference type="FunFam" id="3.40.50.1440:FF:000016">
    <property type="entry name" value="Tubulin alpha chain"/>
    <property type="match status" value="1"/>
</dbReference>
<dbReference type="Gene3D" id="1.10.287.600">
    <property type="entry name" value="Helix hairpin bin"/>
    <property type="match status" value="1"/>
</dbReference>
<dbReference type="Gene3D" id="3.30.1330.20">
    <property type="entry name" value="Tubulin/FtsZ, C-terminal domain"/>
    <property type="match status" value="1"/>
</dbReference>
<dbReference type="Gene3D" id="3.40.50.1440">
    <property type="entry name" value="Tubulin/FtsZ, GTPase domain"/>
    <property type="match status" value="1"/>
</dbReference>
<dbReference type="InterPro" id="IPR002452">
    <property type="entry name" value="Alpha_tubulin"/>
</dbReference>
<dbReference type="InterPro" id="IPR008280">
    <property type="entry name" value="Tub_FtsZ_C"/>
</dbReference>
<dbReference type="InterPro" id="IPR000217">
    <property type="entry name" value="Tubulin"/>
</dbReference>
<dbReference type="InterPro" id="IPR037103">
    <property type="entry name" value="Tubulin/FtsZ-like_C"/>
</dbReference>
<dbReference type="InterPro" id="IPR018316">
    <property type="entry name" value="Tubulin/FtsZ_2-layer-sand-dom"/>
</dbReference>
<dbReference type="InterPro" id="IPR036525">
    <property type="entry name" value="Tubulin/FtsZ_GTPase_sf"/>
</dbReference>
<dbReference type="InterPro" id="IPR023123">
    <property type="entry name" value="Tubulin_C"/>
</dbReference>
<dbReference type="InterPro" id="IPR017975">
    <property type="entry name" value="Tubulin_CS"/>
</dbReference>
<dbReference type="InterPro" id="IPR003008">
    <property type="entry name" value="Tubulin_FtsZ_GTPase"/>
</dbReference>
<dbReference type="PANTHER" id="PTHR11588">
    <property type="entry name" value="TUBULIN"/>
    <property type="match status" value="1"/>
</dbReference>
<dbReference type="Pfam" id="PF00091">
    <property type="entry name" value="Tubulin"/>
    <property type="match status" value="1"/>
</dbReference>
<dbReference type="Pfam" id="PF03953">
    <property type="entry name" value="Tubulin_C"/>
    <property type="match status" value="1"/>
</dbReference>
<dbReference type="PRINTS" id="PR01162">
    <property type="entry name" value="ALPHATUBULIN"/>
</dbReference>
<dbReference type="PRINTS" id="PR01161">
    <property type="entry name" value="TUBULIN"/>
</dbReference>
<dbReference type="SMART" id="SM00864">
    <property type="entry name" value="Tubulin"/>
    <property type="match status" value="1"/>
</dbReference>
<dbReference type="SMART" id="SM00865">
    <property type="entry name" value="Tubulin_C"/>
    <property type="match status" value="1"/>
</dbReference>
<dbReference type="SUPFAM" id="SSF55307">
    <property type="entry name" value="Tubulin C-terminal domain-like"/>
    <property type="match status" value="1"/>
</dbReference>
<dbReference type="SUPFAM" id="SSF52490">
    <property type="entry name" value="Tubulin nucleotide-binding domain-like"/>
    <property type="match status" value="1"/>
</dbReference>
<dbReference type="PROSITE" id="PS00227">
    <property type="entry name" value="TUBULIN"/>
    <property type="match status" value="1"/>
</dbReference>
<keyword id="KW-0963">Cytoplasm</keyword>
<keyword id="KW-0206">Cytoskeleton</keyword>
<keyword id="KW-0342">GTP-binding</keyword>
<keyword id="KW-0378">Hydrolase</keyword>
<keyword id="KW-0493">Microtubule</keyword>
<keyword id="KW-0547">Nucleotide-binding</keyword>
<keyword id="KW-1185">Reference proteome</keyword>
<proteinExistence type="inferred from homology"/>
<protein>
    <recommendedName>
        <fullName>Tubulin alpha-4 chain</fullName>
        <ecNumber evidence="1">3.6.5.-</ecNumber>
    </recommendedName>
</protein>
<sequence>ADACSGLQGFLIFHSFGGGTGSGFTSLLMERLSVDYGKKSKLEFAIYPAPQVSTAVVEPYNSILTTHTTLEHSDCAFMVDNEAIYDICCRNLDIERPTYTNLNRLISQIVSSITASLRFDGALNVDLTEFQTNLVPYPRIHFPLVTYAPIISSERAYHEQLSVAEITSSCFEPNNQMVKCDPRHGKYMACCMLYRGDVVPKDVNVAIAAIKTKRNIQFVDWCPTGVKVGINYQPPTVVPGGDLAQVQRAVCMLSNTTAIAEAWARLDHKFDLMYAKRAFVHWYVSEGMEEGEFAEAREDLAALEKDYEEVGTDSFEDENDEE</sequence>
<name>TBA4_CHICK</name>
<feature type="chain" id="PRO_0000048150" description="Tubulin alpha-4 chain">
    <location>
        <begin position="1" status="less than"/>
        <end position="322"/>
    </location>
</feature>
<feature type="active site" evidence="1">
    <location>
        <position position="129"/>
    </location>
</feature>
<feature type="binding site" evidence="1">
    <location>
        <position position="15"/>
    </location>
    <ligand>
        <name>GTP</name>
        <dbReference type="ChEBI" id="CHEBI:37565"/>
    </ligand>
</feature>
<feature type="binding site" evidence="1">
    <location>
        <position position="19"/>
    </location>
    <ligand>
        <name>GTP</name>
        <dbReference type="ChEBI" id="CHEBI:37565"/>
    </ligand>
</feature>
<feature type="binding site" evidence="1">
    <location>
        <position position="20"/>
    </location>
    <ligand>
        <name>GTP</name>
        <dbReference type="ChEBI" id="CHEBI:37565"/>
    </ligand>
</feature>
<feature type="binding site" evidence="1">
    <location>
        <position position="54"/>
    </location>
    <ligand>
        <name>GTP</name>
        <dbReference type="ChEBI" id="CHEBI:37565"/>
    </ligand>
</feature>
<feature type="binding site" evidence="1">
    <location>
        <position position="81"/>
    </location>
    <ligand>
        <name>GTP</name>
        <dbReference type="ChEBI" id="CHEBI:37565"/>
    </ligand>
</feature>
<feature type="binding site" evidence="1">
    <location>
        <position position="103"/>
    </location>
    <ligand>
        <name>GTP</name>
        <dbReference type="ChEBI" id="CHEBI:37565"/>
    </ligand>
</feature>
<feature type="non-terminal residue">
    <location>
        <position position="1"/>
    </location>
</feature>